<evidence type="ECO:0000255" key="1">
    <source>
        <dbReference type="HAMAP-Rule" id="MF_01345"/>
    </source>
</evidence>
<evidence type="ECO:0000305" key="2"/>
<sequence>MPKRVLQGVVVSDKNDKTVVVKVERRYSHPLLQKTVRQSKKYKAHDENNQFKVGDFVSIQESAPISKDKRWVVLTSEAAG</sequence>
<keyword id="KW-0687">Ribonucleoprotein</keyword>
<keyword id="KW-0689">Ribosomal protein</keyword>
<keyword id="KW-0694">RNA-binding</keyword>
<keyword id="KW-0699">rRNA-binding</keyword>
<accession>Q8G082</accession>
<accession>G0KAE5</accession>
<reference key="1">
    <citation type="journal article" date="2002" name="Proc. Natl. Acad. Sci. U.S.A.">
        <title>The Brucella suis genome reveals fundamental similarities between animal and plant pathogens and symbionts.</title>
        <authorList>
            <person name="Paulsen I.T."/>
            <person name="Seshadri R."/>
            <person name="Nelson K.E."/>
            <person name="Eisen J.A."/>
            <person name="Heidelberg J.F."/>
            <person name="Read T.D."/>
            <person name="Dodson R.J."/>
            <person name="Umayam L.A."/>
            <person name="Brinkac L.M."/>
            <person name="Beanan M.J."/>
            <person name="Daugherty S.C."/>
            <person name="DeBoy R.T."/>
            <person name="Durkin A.S."/>
            <person name="Kolonay J.F."/>
            <person name="Madupu R."/>
            <person name="Nelson W.C."/>
            <person name="Ayodeji B."/>
            <person name="Kraul M."/>
            <person name="Shetty J."/>
            <person name="Malek J.A."/>
            <person name="Van Aken S.E."/>
            <person name="Riedmuller S."/>
            <person name="Tettelin H."/>
            <person name="Gill S.R."/>
            <person name="White O."/>
            <person name="Salzberg S.L."/>
            <person name="Hoover D.L."/>
            <person name="Lindler L.E."/>
            <person name="Halling S.M."/>
            <person name="Boyle S.M."/>
            <person name="Fraser C.M."/>
        </authorList>
    </citation>
    <scope>NUCLEOTIDE SEQUENCE [LARGE SCALE GENOMIC DNA]</scope>
    <source>
        <strain>1330</strain>
    </source>
</reference>
<reference key="2">
    <citation type="journal article" date="2011" name="J. Bacteriol.">
        <title>Revised genome sequence of Brucella suis 1330.</title>
        <authorList>
            <person name="Tae H."/>
            <person name="Shallom S."/>
            <person name="Settlage R."/>
            <person name="Preston D."/>
            <person name="Adams L.G."/>
            <person name="Garner H.R."/>
        </authorList>
    </citation>
    <scope>NUCLEOTIDE SEQUENCE [LARGE SCALE GENOMIC DNA]</scope>
    <source>
        <strain>1330</strain>
    </source>
</reference>
<organism>
    <name type="scientific">Brucella suis biovar 1 (strain 1330)</name>
    <dbReference type="NCBI Taxonomy" id="204722"/>
    <lineage>
        <taxon>Bacteria</taxon>
        <taxon>Pseudomonadati</taxon>
        <taxon>Pseudomonadota</taxon>
        <taxon>Alphaproteobacteria</taxon>
        <taxon>Hyphomicrobiales</taxon>
        <taxon>Brucellaceae</taxon>
        <taxon>Brucella/Ochrobactrum group</taxon>
        <taxon>Brucella</taxon>
    </lineage>
</organism>
<gene>
    <name evidence="1" type="primary">rpsQ</name>
    <name type="ordered locus">BR1224</name>
    <name type="ordered locus">BS1330_I1220</name>
</gene>
<feature type="chain" id="PRO_0000233444" description="Small ribosomal subunit protein uS17">
    <location>
        <begin position="1"/>
        <end position="80"/>
    </location>
</feature>
<name>RS17_BRUSU</name>
<dbReference type="EMBL" id="AE014291">
    <property type="protein sequence ID" value="AAN30143.1"/>
    <property type="molecule type" value="Genomic_DNA"/>
</dbReference>
<dbReference type="EMBL" id="CP002997">
    <property type="protein sequence ID" value="AEM18561.1"/>
    <property type="molecule type" value="Genomic_DNA"/>
</dbReference>
<dbReference type="PIR" id="AH3347">
    <property type="entry name" value="AH3347"/>
</dbReference>
<dbReference type="RefSeq" id="WP_002964353.1">
    <property type="nucleotide sequence ID" value="NZ_KN046804.1"/>
</dbReference>
<dbReference type="SMR" id="Q8G082"/>
<dbReference type="GeneID" id="97533533"/>
<dbReference type="KEGG" id="bms:BR1224"/>
<dbReference type="KEGG" id="bsi:BS1330_I1220"/>
<dbReference type="PATRIC" id="fig|204722.21.peg.2252"/>
<dbReference type="HOGENOM" id="CLU_073626_1_1_5"/>
<dbReference type="Proteomes" id="UP000007104">
    <property type="component" value="Chromosome I"/>
</dbReference>
<dbReference type="GO" id="GO:0022627">
    <property type="term" value="C:cytosolic small ribosomal subunit"/>
    <property type="evidence" value="ECO:0007669"/>
    <property type="project" value="TreeGrafter"/>
</dbReference>
<dbReference type="GO" id="GO:0019843">
    <property type="term" value="F:rRNA binding"/>
    <property type="evidence" value="ECO:0007669"/>
    <property type="project" value="UniProtKB-UniRule"/>
</dbReference>
<dbReference type="GO" id="GO:0003735">
    <property type="term" value="F:structural constituent of ribosome"/>
    <property type="evidence" value="ECO:0007669"/>
    <property type="project" value="InterPro"/>
</dbReference>
<dbReference type="GO" id="GO:0006412">
    <property type="term" value="P:translation"/>
    <property type="evidence" value="ECO:0007669"/>
    <property type="project" value="UniProtKB-UniRule"/>
</dbReference>
<dbReference type="CDD" id="cd00364">
    <property type="entry name" value="Ribosomal_uS17"/>
    <property type="match status" value="1"/>
</dbReference>
<dbReference type="Gene3D" id="2.40.50.140">
    <property type="entry name" value="Nucleic acid-binding proteins"/>
    <property type="match status" value="1"/>
</dbReference>
<dbReference type="HAMAP" id="MF_01345_B">
    <property type="entry name" value="Ribosomal_uS17_B"/>
    <property type="match status" value="1"/>
</dbReference>
<dbReference type="InterPro" id="IPR012340">
    <property type="entry name" value="NA-bd_OB-fold"/>
</dbReference>
<dbReference type="InterPro" id="IPR000266">
    <property type="entry name" value="Ribosomal_uS17"/>
</dbReference>
<dbReference type="InterPro" id="IPR019984">
    <property type="entry name" value="Ribosomal_uS17_bact/chlr"/>
</dbReference>
<dbReference type="NCBIfam" id="NF004123">
    <property type="entry name" value="PRK05610.1"/>
    <property type="match status" value="1"/>
</dbReference>
<dbReference type="NCBIfam" id="TIGR03635">
    <property type="entry name" value="uS17_bact"/>
    <property type="match status" value="1"/>
</dbReference>
<dbReference type="PANTHER" id="PTHR10744">
    <property type="entry name" value="40S RIBOSOMAL PROTEIN S11 FAMILY MEMBER"/>
    <property type="match status" value="1"/>
</dbReference>
<dbReference type="PANTHER" id="PTHR10744:SF1">
    <property type="entry name" value="SMALL RIBOSOMAL SUBUNIT PROTEIN US17M"/>
    <property type="match status" value="1"/>
</dbReference>
<dbReference type="Pfam" id="PF00366">
    <property type="entry name" value="Ribosomal_S17"/>
    <property type="match status" value="1"/>
</dbReference>
<dbReference type="PRINTS" id="PR00973">
    <property type="entry name" value="RIBOSOMALS17"/>
</dbReference>
<dbReference type="SUPFAM" id="SSF50249">
    <property type="entry name" value="Nucleic acid-binding proteins"/>
    <property type="match status" value="1"/>
</dbReference>
<protein>
    <recommendedName>
        <fullName evidence="1">Small ribosomal subunit protein uS17</fullName>
    </recommendedName>
    <alternativeName>
        <fullName evidence="2">30S ribosomal protein S17</fullName>
    </alternativeName>
</protein>
<proteinExistence type="inferred from homology"/>
<comment type="function">
    <text evidence="1">One of the primary rRNA binding proteins, it binds specifically to the 5'-end of 16S ribosomal RNA.</text>
</comment>
<comment type="subunit">
    <text evidence="1">Part of the 30S ribosomal subunit.</text>
</comment>
<comment type="similarity">
    <text evidence="1">Belongs to the universal ribosomal protein uS17 family.</text>
</comment>